<dbReference type="EMBL" id="CP000510">
    <property type="protein sequence ID" value="ABM05407.1"/>
    <property type="molecule type" value="Genomic_DNA"/>
</dbReference>
<dbReference type="RefSeq" id="WP_011771955.1">
    <property type="nucleotide sequence ID" value="NC_008709.1"/>
</dbReference>
<dbReference type="SMR" id="A1T0Z2"/>
<dbReference type="STRING" id="357804.Ping_3733"/>
<dbReference type="KEGG" id="pin:Ping_3733"/>
<dbReference type="eggNOG" id="COG0712">
    <property type="taxonomic scope" value="Bacteria"/>
</dbReference>
<dbReference type="HOGENOM" id="CLU_085114_3_0_6"/>
<dbReference type="OrthoDB" id="9816221at2"/>
<dbReference type="Proteomes" id="UP000000639">
    <property type="component" value="Chromosome"/>
</dbReference>
<dbReference type="GO" id="GO:0005886">
    <property type="term" value="C:plasma membrane"/>
    <property type="evidence" value="ECO:0007669"/>
    <property type="project" value="UniProtKB-SubCell"/>
</dbReference>
<dbReference type="GO" id="GO:0045259">
    <property type="term" value="C:proton-transporting ATP synthase complex"/>
    <property type="evidence" value="ECO:0007669"/>
    <property type="project" value="UniProtKB-KW"/>
</dbReference>
<dbReference type="GO" id="GO:0046933">
    <property type="term" value="F:proton-transporting ATP synthase activity, rotational mechanism"/>
    <property type="evidence" value="ECO:0007669"/>
    <property type="project" value="UniProtKB-UniRule"/>
</dbReference>
<dbReference type="Gene3D" id="1.10.520.20">
    <property type="entry name" value="N-terminal domain of the delta subunit of the F1F0-ATP synthase"/>
    <property type="match status" value="1"/>
</dbReference>
<dbReference type="HAMAP" id="MF_01416">
    <property type="entry name" value="ATP_synth_delta_bact"/>
    <property type="match status" value="1"/>
</dbReference>
<dbReference type="InterPro" id="IPR026015">
    <property type="entry name" value="ATP_synth_OSCP/delta_N_sf"/>
</dbReference>
<dbReference type="InterPro" id="IPR000711">
    <property type="entry name" value="ATPase_OSCP/dsu"/>
</dbReference>
<dbReference type="NCBIfam" id="TIGR01145">
    <property type="entry name" value="ATP_synt_delta"/>
    <property type="match status" value="1"/>
</dbReference>
<dbReference type="NCBIfam" id="NF004402">
    <property type="entry name" value="PRK05758.2-2"/>
    <property type="match status" value="1"/>
</dbReference>
<dbReference type="NCBIfam" id="NF004404">
    <property type="entry name" value="PRK05758.2-5"/>
    <property type="match status" value="1"/>
</dbReference>
<dbReference type="PANTHER" id="PTHR11910">
    <property type="entry name" value="ATP SYNTHASE DELTA CHAIN"/>
    <property type="match status" value="1"/>
</dbReference>
<dbReference type="Pfam" id="PF00213">
    <property type="entry name" value="OSCP"/>
    <property type="match status" value="1"/>
</dbReference>
<dbReference type="PRINTS" id="PR00125">
    <property type="entry name" value="ATPASEDELTA"/>
</dbReference>
<dbReference type="SUPFAM" id="SSF47928">
    <property type="entry name" value="N-terminal domain of the delta subunit of the F1F0-ATP synthase"/>
    <property type="match status" value="1"/>
</dbReference>
<evidence type="ECO:0000255" key="1">
    <source>
        <dbReference type="HAMAP-Rule" id="MF_01416"/>
    </source>
</evidence>
<organism>
    <name type="scientific">Psychromonas ingrahamii (strain DSM 17664 / CCUG 51855 / 37)</name>
    <dbReference type="NCBI Taxonomy" id="357804"/>
    <lineage>
        <taxon>Bacteria</taxon>
        <taxon>Pseudomonadati</taxon>
        <taxon>Pseudomonadota</taxon>
        <taxon>Gammaproteobacteria</taxon>
        <taxon>Alteromonadales</taxon>
        <taxon>Psychromonadaceae</taxon>
        <taxon>Psychromonas</taxon>
    </lineage>
</organism>
<reference key="1">
    <citation type="journal article" date="2008" name="BMC Genomics">
        <title>Genomics of an extreme psychrophile, Psychromonas ingrahamii.</title>
        <authorList>
            <person name="Riley M."/>
            <person name="Staley J.T."/>
            <person name="Danchin A."/>
            <person name="Wang T.Z."/>
            <person name="Brettin T.S."/>
            <person name="Hauser L.J."/>
            <person name="Land M.L."/>
            <person name="Thompson L.S."/>
        </authorList>
    </citation>
    <scope>NUCLEOTIDE SEQUENCE [LARGE SCALE GENOMIC DNA]</scope>
    <source>
        <strain>DSM 17664 / CCUG 51855 / 37</strain>
    </source>
</reference>
<name>ATPD_PSYIN</name>
<keyword id="KW-0066">ATP synthesis</keyword>
<keyword id="KW-0997">Cell inner membrane</keyword>
<keyword id="KW-1003">Cell membrane</keyword>
<keyword id="KW-0139">CF(1)</keyword>
<keyword id="KW-0375">Hydrogen ion transport</keyword>
<keyword id="KW-0406">Ion transport</keyword>
<keyword id="KW-0472">Membrane</keyword>
<keyword id="KW-1185">Reference proteome</keyword>
<keyword id="KW-0813">Transport</keyword>
<accession>A1T0Z2</accession>
<protein>
    <recommendedName>
        <fullName evidence="1">ATP synthase subunit delta</fullName>
    </recommendedName>
    <alternativeName>
        <fullName evidence="1">ATP synthase F(1) sector subunit delta</fullName>
    </alternativeName>
    <alternativeName>
        <fullName evidence="1">F-type ATPase subunit delta</fullName>
        <shortName evidence="1">F-ATPase subunit delta</shortName>
    </alternativeName>
</protein>
<feature type="chain" id="PRO_0000371085" description="ATP synthase subunit delta">
    <location>
        <begin position="1"/>
        <end position="177"/>
    </location>
</feature>
<sequence length="177" mass="19694">MSELTTVARPYARAAFEFAVDSNKIEAWSEMLFFTAEVVNNPTMVKILTSDKTAQELAELFLNVCEDQLDENGQNFIKIMAENGRLRFLPRVAQLFAALEDEHKKQVDVNVVSAYGLSKKQLDELSKSLEKRLARKVNLHCSIDKTLIAGMVVTVGDLVIDSSAKGQLGRLSNTLQS</sequence>
<gene>
    <name evidence="1" type="primary">atpH</name>
    <name type="ordered locus">Ping_3733</name>
</gene>
<proteinExistence type="inferred from homology"/>
<comment type="function">
    <text evidence="1">F(1)F(0) ATP synthase produces ATP from ADP in the presence of a proton or sodium gradient. F-type ATPases consist of two structural domains, F(1) containing the extramembraneous catalytic core and F(0) containing the membrane proton channel, linked together by a central stalk and a peripheral stalk. During catalysis, ATP synthesis in the catalytic domain of F(1) is coupled via a rotary mechanism of the central stalk subunits to proton translocation.</text>
</comment>
<comment type="function">
    <text evidence="1">This protein is part of the stalk that links CF(0) to CF(1). It either transmits conformational changes from CF(0) to CF(1) or is implicated in proton conduction.</text>
</comment>
<comment type="subunit">
    <text evidence="1">F-type ATPases have 2 components, F(1) - the catalytic core - and F(0) - the membrane proton channel. F(1) has five subunits: alpha(3), beta(3), gamma(1), delta(1), epsilon(1). F(0) has three main subunits: a(1), b(2) and c(10-14). The alpha and beta chains form an alternating ring which encloses part of the gamma chain. F(1) is attached to F(0) by a central stalk formed by the gamma and epsilon chains, while a peripheral stalk is formed by the delta and b chains.</text>
</comment>
<comment type="subcellular location">
    <subcellularLocation>
        <location evidence="1">Cell inner membrane</location>
        <topology evidence="1">Peripheral membrane protein</topology>
    </subcellularLocation>
</comment>
<comment type="similarity">
    <text evidence="1">Belongs to the ATPase delta chain family.</text>
</comment>